<organism>
    <name type="scientific">Nostoc sp. (strain PCC 7120 / SAG 25.82 / UTEX 2576)</name>
    <dbReference type="NCBI Taxonomy" id="103690"/>
    <lineage>
        <taxon>Bacteria</taxon>
        <taxon>Bacillati</taxon>
        <taxon>Cyanobacteriota</taxon>
        <taxon>Cyanophyceae</taxon>
        <taxon>Nostocales</taxon>
        <taxon>Nostocaceae</taxon>
        <taxon>Nostoc</taxon>
    </lineage>
</organism>
<accession>Q8YQU9</accession>
<name>SYR_NOSS1</name>
<proteinExistence type="inferred from homology"/>
<feature type="chain" id="PRO_0000151523" description="Arginine--tRNA ligase">
    <location>
        <begin position="1"/>
        <end position="588"/>
    </location>
</feature>
<feature type="short sequence motif" description="'HIGH' region">
    <location>
        <begin position="126"/>
        <end position="136"/>
    </location>
</feature>
<protein>
    <recommendedName>
        <fullName evidence="1">Arginine--tRNA ligase</fullName>
        <ecNumber evidence="1">6.1.1.19</ecNumber>
    </recommendedName>
    <alternativeName>
        <fullName evidence="1">Arginyl-tRNA synthetase</fullName>
        <shortName evidence="1">ArgRS</shortName>
    </alternativeName>
</protein>
<sequence>MNATQEQLKIKLEQALVAAFGDEYAGVDPILVSASNPKFGDYQANVALSLSKKLGQQPRAIASAIVEKLDVSEICEKPEIAGPGFINLKLKTAYLEAQLNTIQADTRLGVPTAKHPQREIVDFSSPNIAKEMHVGHLRSTIIGDSIARILEFRGHDVLRLNHVGDWGTQFGMLITYLREVSPEALTTANALDIGDLVSFYRQAKQRFDADEAFQETARQEVVRLQAGAADTLHAWKLLCEQSRQEFQVIYDLLDVKLTERGESFYNPLLPTVVENLEKSGLLVENQGAKCVFLDGFTNREGEPLPLIVQKSDGGYNYATTDLAALRYRIQKDEAKRIIYITDAGQANHFAQFFQVARKAGWIPDDVELVHVPFGLVLGEDGKKFKTRSGDTVRLRDLLDEAISRAHADVEVRLKAEEREETAEFIDKVAEVVGISAVKYADLSQNRTSNYIFSYDKMLDLKGNTAPYMLYAYARIQGISRKGEINFADLGDNAKVILQHETEFALAKYLLQLGEVISTVEEDLSPNRLCEYLYELSKRFNAFYDRNQGVQVLSAEEPLRTSRLVLCDLTARTLKLGLSLLGIQVLERM</sequence>
<dbReference type="EC" id="6.1.1.19" evidence="1"/>
<dbReference type="EMBL" id="BA000019">
    <property type="protein sequence ID" value="BAB75416.1"/>
    <property type="molecule type" value="Genomic_DNA"/>
</dbReference>
<dbReference type="PIR" id="AF2270">
    <property type="entry name" value="AF2270"/>
</dbReference>
<dbReference type="RefSeq" id="WP_010997860.1">
    <property type="nucleotide sequence ID" value="NZ_RSCN01000007.1"/>
</dbReference>
<dbReference type="SMR" id="Q8YQU9"/>
<dbReference type="STRING" id="103690.gene:10495759"/>
<dbReference type="KEGG" id="ana:all3717"/>
<dbReference type="eggNOG" id="COG0018">
    <property type="taxonomic scope" value="Bacteria"/>
</dbReference>
<dbReference type="OrthoDB" id="9805987at2"/>
<dbReference type="Proteomes" id="UP000002483">
    <property type="component" value="Chromosome"/>
</dbReference>
<dbReference type="GO" id="GO:0005737">
    <property type="term" value="C:cytoplasm"/>
    <property type="evidence" value="ECO:0007669"/>
    <property type="project" value="UniProtKB-SubCell"/>
</dbReference>
<dbReference type="GO" id="GO:0004814">
    <property type="term" value="F:arginine-tRNA ligase activity"/>
    <property type="evidence" value="ECO:0007669"/>
    <property type="project" value="UniProtKB-UniRule"/>
</dbReference>
<dbReference type="GO" id="GO:0005524">
    <property type="term" value="F:ATP binding"/>
    <property type="evidence" value="ECO:0007669"/>
    <property type="project" value="UniProtKB-UniRule"/>
</dbReference>
<dbReference type="GO" id="GO:0006420">
    <property type="term" value="P:arginyl-tRNA aminoacylation"/>
    <property type="evidence" value="ECO:0007669"/>
    <property type="project" value="UniProtKB-UniRule"/>
</dbReference>
<dbReference type="CDD" id="cd07956">
    <property type="entry name" value="Anticodon_Ia_Arg"/>
    <property type="match status" value="1"/>
</dbReference>
<dbReference type="CDD" id="cd00671">
    <property type="entry name" value="ArgRS_core"/>
    <property type="match status" value="1"/>
</dbReference>
<dbReference type="FunFam" id="3.40.50.620:FF:000030">
    <property type="entry name" value="Arginine--tRNA ligase"/>
    <property type="match status" value="1"/>
</dbReference>
<dbReference type="FunFam" id="1.10.730.10:FF:000006">
    <property type="entry name" value="Arginyl-tRNA synthetase 2, mitochondrial"/>
    <property type="match status" value="1"/>
</dbReference>
<dbReference type="Gene3D" id="3.30.1360.70">
    <property type="entry name" value="Arginyl tRNA synthetase N-terminal domain"/>
    <property type="match status" value="1"/>
</dbReference>
<dbReference type="Gene3D" id="3.40.50.620">
    <property type="entry name" value="HUPs"/>
    <property type="match status" value="1"/>
</dbReference>
<dbReference type="Gene3D" id="1.10.730.10">
    <property type="entry name" value="Isoleucyl-tRNA Synthetase, Domain 1"/>
    <property type="match status" value="1"/>
</dbReference>
<dbReference type="HAMAP" id="MF_00123">
    <property type="entry name" value="Arg_tRNA_synth"/>
    <property type="match status" value="1"/>
</dbReference>
<dbReference type="InterPro" id="IPR001412">
    <property type="entry name" value="aa-tRNA-synth_I_CS"/>
</dbReference>
<dbReference type="InterPro" id="IPR001278">
    <property type="entry name" value="Arg-tRNA-ligase"/>
</dbReference>
<dbReference type="InterPro" id="IPR005148">
    <property type="entry name" value="Arg-tRNA-synth_N"/>
</dbReference>
<dbReference type="InterPro" id="IPR036695">
    <property type="entry name" value="Arg-tRNA-synth_N_sf"/>
</dbReference>
<dbReference type="InterPro" id="IPR035684">
    <property type="entry name" value="ArgRS_core"/>
</dbReference>
<dbReference type="InterPro" id="IPR008909">
    <property type="entry name" value="DALR_anticod-bd"/>
</dbReference>
<dbReference type="InterPro" id="IPR014729">
    <property type="entry name" value="Rossmann-like_a/b/a_fold"/>
</dbReference>
<dbReference type="InterPro" id="IPR009080">
    <property type="entry name" value="tRNAsynth_Ia_anticodon-bd"/>
</dbReference>
<dbReference type="NCBIfam" id="TIGR00456">
    <property type="entry name" value="argS"/>
    <property type="match status" value="1"/>
</dbReference>
<dbReference type="PANTHER" id="PTHR11956:SF5">
    <property type="entry name" value="ARGININE--TRNA LIGASE, CYTOPLASMIC"/>
    <property type="match status" value="1"/>
</dbReference>
<dbReference type="PANTHER" id="PTHR11956">
    <property type="entry name" value="ARGINYL-TRNA SYNTHETASE"/>
    <property type="match status" value="1"/>
</dbReference>
<dbReference type="Pfam" id="PF03485">
    <property type="entry name" value="Arg_tRNA_synt_N"/>
    <property type="match status" value="1"/>
</dbReference>
<dbReference type="Pfam" id="PF05746">
    <property type="entry name" value="DALR_1"/>
    <property type="match status" value="1"/>
</dbReference>
<dbReference type="Pfam" id="PF00750">
    <property type="entry name" value="tRNA-synt_1d"/>
    <property type="match status" value="1"/>
</dbReference>
<dbReference type="PRINTS" id="PR01038">
    <property type="entry name" value="TRNASYNTHARG"/>
</dbReference>
<dbReference type="SMART" id="SM01016">
    <property type="entry name" value="Arg_tRNA_synt_N"/>
    <property type="match status" value="1"/>
</dbReference>
<dbReference type="SMART" id="SM00836">
    <property type="entry name" value="DALR_1"/>
    <property type="match status" value="1"/>
</dbReference>
<dbReference type="SUPFAM" id="SSF47323">
    <property type="entry name" value="Anticodon-binding domain of a subclass of class I aminoacyl-tRNA synthetases"/>
    <property type="match status" value="1"/>
</dbReference>
<dbReference type="SUPFAM" id="SSF55190">
    <property type="entry name" value="Arginyl-tRNA synthetase (ArgRS), N-terminal 'additional' domain"/>
    <property type="match status" value="1"/>
</dbReference>
<dbReference type="SUPFAM" id="SSF52374">
    <property type="entry name" value="Nucleotidylyl transferase"/>
    <property type="match status" value="1"/>
</dbReference>
<dbReference type="PROSITE" id="PS00178">
    <property type="entry name" value="AA_TRNA_LIGASE_I"/>
    <property type="match status" value="1"/>
</dbReference>
<gene>
    <name evidence="1" type="primary">argS</name>
    <name type="ordered locus">all3717</name>
</gene>
<keyword id="KW-0030">Aminoacyl-tRNA synthetase</keyword>
<keyword id="KW-0067">ATP-binding</keyword>
<keyword id="KW-0963">Cytoplasm</keyword>
<keyword id="KW-0436">Ligase</keyword>
<keyword id="KW-0547">Nucleotide-binding</keyword>
<keyword id="KW-0648">Protein biosynthesis</keyword>
<keyword id="KW-1185">Reference proteome</keyword>
<evidence type="ECO:0000255" key="1">
    <source>
        <dbReference type="HAMAP-Rule" id="MF_00123"/>
    </source>
</evidence>
<reference key="1">
    <citation type="journal article" date="2001" name="DNA Res.">
        <title>Complete genomic sequence of the filamentous nitrogen-fixing cyanobacterium Anabaena sp. strain PCC 7120.</title>
        <authorList>
            <person name="Kaneko T."/>
            <person name="Nakamura Y."/>
            <person name="Wolk C.P."/>
            <person name="Kuritz T."/>
            <person name="Sasamoto S."/>
            <person name="Watanabe A."/>
            <person name="Iriguchi M."/>
            <person name="Ishikawa A."/>
            <person name="Kawashima K."/>
            <person name="Kimura T."/>
            <person name="Kishida Y."/>
            <person name="Kohara M."/>
            <person name="Matsumoto M."/>
            <person name="Matsuno A."/>
            <person name="Muraki A."/>
            <person name="Nakazaki N."/>
            <person name="Shimpo S."/>
            <person name="Sugimoto M."/>
            <person name="Takazawa M."/>
            <person name="Yamada M."/>
            <person name="Yasuda M."/>
            <person name="Tabata S."/>
        </authorList>
    </citation>
    <scope>NUCLEOTIDE SEQUENCE [LARGE SCALE GENOMIC DNA]</scope>
    <source>
        <strain>PCC 7120 / SAG 25.82 / UTEX 2576</strain>
    </source>
</reference>
<comment type="catalytic activity">
    <reaction evidence="1">
        <text>tRNA(Arg) + L-arginine + ATP = L-arginyl-tRNA(Arg) + AMP + diphosphate</text>
        <dbReference type="Rhea" id="RHEA:20301"/>
        <dbReference type="Rhea" id="RHEA-COMP:9658"/>
        <dbReference type="Rhea" id="RHEA-COMP:9673"/>
        <dbReference type="ChEBI" id="CHEBI:30616"/>
        <dbReference type="ChEBI" id="CHEBI:32682"/>
        <dbReference type="ChEBI" id="CHEBI:33019"/>
        <dbReference type="ChEBI" id="CHEBI:78442"/>
        <dbReference type="ChEBI" id="CHEBI:78513"/>
        <dbReference type="ChEBI" id="CHEBI:456215"/>
        <dbReference type="EC" id="6.1.1.19"/>
    </reaction>
</comment>
<comment type="subunit">
    <text evidence="1">Monomer.</text>
</comment>
<comment type="subcellular location">
    <subcellularLocation>
        <location evidence="1">Cytoplasm</location>
    </subcellularLocation>
</comment>
<comment type="similarity">
    <text evidence="1">Belongs to the class-I aminoacyl-tRNA synthetase family.</text>
</comment>